<gene>
    <name evidence="1" type="primary">bshC</name>
    <name type="ordered locus">Bcer98_2569</name>
</gene>
<dbReference type="EC" id="6.-.-.-" evidence="1"/>
<dbReference type="EMBL" id="CP000764">
    <property type="protein sequence ID" value="ABS22803.1"/>
    <property type="molecule type" value="Genomic_DNA"/>
</dbReference>
<dbReference type="RefSeq" id="WP_012095010.1">
    <property type="nucleotide sequence ID" value="NC_009674.1"/>
</dbReference>
<dbReference type="SMR" id="A7GRP5"/>
<dbReference type="STRING" id="315749.Bcer98_2569"/>
<dbReference type="GeneID" id="33897822"/>
<dbReference type="KEGG" id="bcy:Bcer98_2569"/>
<dbReference type="eggNOG" id="COG4365">
    <property type="taxonomic scope" value="Bacteria"/>
</dbReference>
<dbReference type="HOGENOM" id="CLU_022249_1_0_9"/>
<dbReference type="OrthoDB" id="9765151at2"/>
<dbReference type="Proteomes" id="UP000002300">
    <property type="component" value="Chromosome"/>
</dbReference>
<dbReference type="GO" id="GO:0016874">
    <property type="term" value="F:ligase activity"/>
    <property type="evidence" value="ECO:0007669"/>
    <property type="project" value="UniProtKB-UniRule"/>
</dbReference>
<dbReference type="HAMAP" id="MF_01867">
    <property type="entry name" value="BshC"/>
    <property type="match status" value="1"/>
</dbReference>
<dbReference type="InterPro" id="IPR011199">
    <property type="entry name" value="Bacillithiol_biosynth_BshC"/>
</dbReference>
<dbReference type="InterPro" id="IPR055399">
    <property type="entry name" value="CC_BshC"/>
</dbReference>
<dbReference type="InterPro" id="IPR055398">
    <property type="entry name" value="Rossmann-like_BshC"/>
</dbReference>
<dbReference type="NCBIfam" id="TIGR03998">
    <property type="entry name" value="thiol_BshC"/>
    <property type="match status" value="1"/>
</dbReference>
<dbReference type="Pfam" id="PF24850">
    <property type="entry name" value="CC_BshC"/>
    <property type="match status" value="1"/>
</dbReference>
<dbReference type="Pfam" id="PF10079">
    <property type="entry name" value="Rossmann-like_BshC"/>
    <property type="match status" value="1"/>
</dbReference>
<dbReference type="PIRSF" id="PIRSF012535">
    <property type="entry name" value="UCP012535"/>
    <property type="match status" value="1"/>
</dbReference>
<proteinExistence type="inferred from homology"/>
<protein>
    <recommendedName>
        <fullName evidence="1">Putative cysteine ligase BshC</fullName>
        <ecNumber evidence="1">6.-.-.-</ecNumber>
    </recommendedName>
</protein>
<name>BSHC_BACCN</name>
<keyword id="KW-0175">Coiled coil</keyword>
<keyword id="KW-0436">Ligase</keyword>
<sequence length="538" mass="63193">MEIKEISVPLQGVVGDYIKSDNKIQTCFDYALTEAGFKQRLYDLRNRKFFRQELVEHLLEYNKQLQAGQSTIQNIEALADENTYVVIGGQQAGLLTGPLYTVHKVISIVQLAKEKEASLGTRVVPVFWIAGEDHDVDEINHTFVTKNKKIKKMIFHDRHSKKTSASESEISIEDCSKWIEEIFKTYPETNFTKDVLQFIQEALEESSTYVDFFARLITKLFADTGLILVDSHHPNLRKLEVSFFKRIISQYKEVQEALHNQQQIVKEYGYKPIIETKQNAIHVFMQIDEERVLLEEENGKFVGKSGIYSFSYEELIEEMEQSPERFSNNVVTRPLMQEYLFPTVAFIGGPGEIAYWSELQQVFHVFDFQMPPVVPRLTISYMERDIITDLYDLNLQEEDPFVKDLDKLREKWLSNQVEEPVEEKFQEAKKNMMDIHSSLQQFVNRIDPGLKEFAGKNERKIQEQIELLERMLKQNLERRHEVELNKFRRLQYALRPLGAPQERVWNVCYYLNQYGLDFVERVTKQSYSWNGTHHVIKL</sequence>
<comment type="function">
    <text evidence="1">Involved in bacillithiol (BSH) biosynthesis. May catalyze the last step of the pathway, the addition of cysteine to glucosamine malate (GlcN-Mal) to generate BSH.</text>
</comment>
<comment type="similarity">
    <text evidence="1">Belongs to the BshC family.</text>
</comment>
<feature type="chain" id="PRO_0000378216" description="Putative cysteine ligase BshC">
    <location>
        <begin position="1"/>
        <end position="538"/>
    </location>
</feature>
<feature type="coiled-coil region" evidence="1">
    <location>
        <begin position="421"/>
        <end position="485"/>
    </location>
</feature>
<reference key="1">
    <citation type="journal article" date="2008" name="Chem. Biol. Interact.">
        <title>Extending the Bacillus cereus group genomics to putative food-borne pathogens of different toxicity.</title>
        <authorList>
            <person name="Lapidus A."/>
            <person name="Goltsman E."/>
            <person name="Auger S."/>
            <person name="Galleron N."/>
            <person name="Segurens B."/>
            <person name="Dossat C."/>
            <person name="Land M.L."/>
            <person name="Broussolle V."/>
            <person name="Brillard J."/>
            <person name="Guinebretiere M.-H."/>
            <person name="Sanchis V."/>
            <person name="Nguen-the C."/>
            <person name="Lereclus D."/>
            <person name="Richardson P."/>
            <person name="Wincker P."/>
            <person name="Weissenbach J."/>
            <person name="Ehrlich S.D."/>
            <person name="Sorokin A."/>
        </authorList>
    </citation>
    <scope>NUCLEOTIDE SEQUENCE [LARGE SCALE GENOMIC DNA]</scope>
    <source>
        <strain>DSM 22905 / CIP 110041 / 391-98 / NVH 391-98</strain>
    </source>
</reference>
<organism>
    <name type="scientific">Bacillus cytotoxicus (strain DSM 22905 / CIP 110041 / 391-98 / NVH 391-98)</name>
    <dbReference type="NCBI Taxonomy" id="315749"/>
    <lineage>
        <taxon>Bacteria</taxon>
        <taxon>Bacillati</taxon>
        <taxon>Bacillota</taxon>
        <taxon>Bacilli</taxon>
        <taxon>Bacillales</taxon>
        <taxon>Bacillaceae</taxon>
        <taxon>Bacillus</taxon>
        <taxon>Bacillus cereus group</taxon>
    </lineage>
</organism>
<accession>A7GRP5</accession>
<evidence type="ECO:0000255" key="1">
    <source>
        <dbReference type="HAMAP-Rule" id="MF_01867"/>
    </source>
</evidence>